<dbReference type="EC" id="3.1.-.-" evidence="3"/>
<dbReference type="EMBL" id="AK056514">
    <property type="protein sequence ID" value="BAB71201.1"/>
    <property type="molecule type" value="mRNA"/>
</dbReference>
<dbReference type="EMBL" id="AK127728">
    <property type="status" value="NOT_ANNOTATED_CDS"/>
    <property type="molecule type" value="mRNA"/>
</dbReference>
<dbReference type="EMBL" id="CR749630">
    <property type="protein sequence ID" value="CAH18424.1"/>
    <property type="molecule type" value="mRNA"/>
</dbReference>
<dbReference type="EMBL" id="AL833747">
    <property type="protein sequence ID" value="CAH56227.1"/>
    <property type="molecule type" value="mRNA"/>
</dbReference>
<dbReference type="EMBL" id="CH471147">
    <property type="protein sequence ID" value="EAW80150.1"/>
    <property type="molecule type" value="Genomic_DNA"/>
</dbReference>
<dbReference type="EMBL" id="CH471147">
    <property type="protein sequence ID" value="EAW80152.1"/>
    <property type="molecule type" value="Genomic_DNA"/>
</dbReference>
<dbReference type="CCDS" id="CCDS32620.1">
    <molecule id="Q68D06-1"/>
</dbReference>
<dbReference type="RefSeq" id="NP_653283.3">
    <molecule id="Q68D06-1"/>
    <property type="nucleotide sequence ID" value="NM_144682.5"/>
</dbReference>
<dbReference type="RefSeq" id="XP_005257979.1">
    <molecule id="Q68D06-1"/>
    <property type="nucleotide sequence ID" value="XM_005257922.3"/>
</dbReference>
<dbReference type="RefSeq" id="XP_016879721.1">
    <property type="nucleotide sequence ID" value="XM_017024232.1"/>
</dbReference>
<dbReference type="RefSeq" id="XP_016879722.1">
    <molecule id="Q68D06-1"/>
    <property type="nucleotide sequence ID" value="XM_017024233.2"/>
</dbReference>
<dbReference type="RefSeq" id="XP_024306382.1">
    <molecule id="Q68D06-1"/>
    <property type="nucleotide sequence ID" value="XM_024450614.2"/>
</dbReference>
<dbReference type="RefSeq" id="XP_047291416.1">
    <molecule id="Q68D06-1"/>
    <property type="nucleotide sequence ID" value="XM_047435460.1"/>
</dbReference>
<dbReference type="RefSeq" id="XP_047291417.1">
    <molecule id="Q68D06-1"/>
    <property type="nucleotide sequence ID" value="XM_047435461.1"/>
</dbReference>
<dbReference type="RefSeq" id="XP_047291418.1">
    <molecule id="Q68D06-1"/>
    <property type="nucleotide sequence ID" value="XM_047435462.1"/>
</dbReference>
<dbReference type="RefSeq" id="XP_047291419.1">
    <molecule id="Q68D06-1"/>
    <property type="nucleotide sequence ID" value="XM_047435463.1"/>
</dbReference>
<dbReference type="RefSeq" id="XP_047291420.1">
    <molecule id="Q68D06-1"/>
    <property type="nucleotide sequence ID" value="XM_047435464.1"/>
</dbReference>
<dbReference type="RefSeq" id="XP_047291421.1">
    <molecule id="Q68D06-1"/>
    <property type="nucleotide sequence ID" value="XM_047435465.1"/>
</dbReference>
<dbReference type="RefSeq" id="XP_047291423.1">
    <molecule id="Q68D06-1"/>
    <property type="nucleotide sequence ID" value="XM_047435467.1"/>
</dbReference>
<dbReference type="RefSeq" id="XP_054171171.1">
    <molecule id="Q68D06-1"/>
    <property type="nucleotide sequence ID" value="XM_054315196.1"/>
</dbReference>
<dbReference type="RefSeq" id="XP_054171172.1">
    <molecule id="Q68D06-1"/>
    <property type="nucleotide sequence ID" value="XM_054315197.1"/>
</dbReference>
<dbReference type="RefSeq" id="XP_054171173.1">
    <molecule id="Q68D06-1"/>
    <property type="nucleotide sequence ID" value="XM_054315198.1"/>
</dbReference>
<dbReference type="RefSeq" id="XP_054171174.1">
    <molecule id="Q68D06-1"/>
    <property type="nucleotide sequence ID" value="XM_054315199.1"/>
</dbReference>
<dbReference type="RefSeq" id="XP_054171175.1">
    <molecule id="Q68D06-1"/>
    <property type="nucleotide sequence ID" value="XM_054315200.1"/>
</dbReference>
<dbReference type="RefSeq" id="XP_054171176.1">
    <molecule id="Q68D06-1"/>
    <property type="nucleotide sequence ID" value="XM_054315201.1"/>
</dbReference>
<dbReference type="RefSeq" id="XP_054171177.1">
    <molecule id="Q68D06-1"/>
    <property type="nucleotide sequence ID" value="XM_054315202.1"/>
</dbReference>
<dbReference type="RefSeq" id="XP_054171178.1">
    <molecule id="Q68D06-1"/>
    <property type="nucleotide sequence ID" value="XM_054315203.1"/>
</dbReference>
<dbReference type="RefSeq" id="XP_054171179.1">
    <molecule id="Q68D06-1"/>
    <property type="nucleotide sequence ID" value="XM_054315204.1"/>
</dbReference>
<dbReference type="RefSeq" id="XP_054171180.1">
    <molecule id="Q68D06-1"/>
    <property type="nucleotide sequence ID" value="XM_054315205.1"/>
</dbReference>
<dbReference type="SMR" id="Q68D06"/>
<dbReference type="BioGRID" id="127019">
    <property type="interactions" value="4"/>
</dbReference>
<dbReference type="FunCoup" id="Q68D06">
    <property type="interactions" value="293"/>
</dbReference>
<dbReference type="IntAct" id="Q68D06">
    <property type="interactions" value="1"/>
</dbReference>
<dbReference type="STRING" id="9606.ENSP00000285013"/>
<dbReference type="iPTMnet" id="Q68D06"/>
<dbReference type="PhosphoSitePlus" id="Q68D06"/>
<dbReference type="BioMuta" id="SLFN13"/>
<dbReference type="DMDM" id="74708791"/>
<dbReference type="jPOST" id="Q68D06"/>
<dbReference type="MassIVE" id="Q68D06"/>
<dbReference type="PaxDb" id="9606-ENSP00000285013"/>
<dbReference type="PeptideAtlas" id="Q68D06"/>
<dbReference type="ProteomicsDB" id="66041">
    <molecule id="Q68D06-1"/>
</dbReference>
<dbReference type="ProteomicsDB" id="66042">
    <molecule id="Q68D06-2"/>
</dbReference>
<dbReference type="Pumba" id="Q68D06"/>
<dbReference type="Antibodypedia" id="15604">
    <property type="antibodies" value="61 antibodies from 15 providers"/>
</dbReference>
<dbReference type="DNASU" id="146857"/>
<dbReference type="Ensembl" id="ENST00000285013.11">
    <molecule id="Q68D06-1"/>
    <property type="protein sequence ID" value="ENSP00000285013.6"/>
    <property type="gene ID" value="ENSG00000154760.14"/>
</dbReference>
<dbReference type="Ensembl" id="ENST00000526861.5">
    <molecule id="Q68D06-1"/>
    <property type="protein sequence ID" value="ENSP00000434439.1"/>
    <property type="gene ID" value="ENSG00000154760.14"/>
</dbReference>
<dbReference type="Ensembl" id="ENST00000533791.5">
    <molecule id="Q68D06-1"/>
    <property type="protein sequence ID" value="ENSP00000467426.1"/>
    <property type="gene ID" value="ENSG00000154760.14"/>
</dbReference>
<dbReference type="Ensembl" id="ENST00000534689.5">
    <molecule id="Q68D06-2"/>
    <property type="protein sequence ID" value="ENSP00000435442.1"/>
    <property type="gene ID" value="ENSG00000154760.14"/>
</dbReference>
<dbReference type="Ensembl" id="ENST00000542635.5">
    <molecule id="Q68D06-1"/>
    <property type="protein sequence ID" value="ENSP00000444016.1"/>
    <property type="gene ID" value="ENSG00000154760.14"/>
</dbReference>
<dbReference type="GeneID" id="146857"/>
<dbReference type="KEGG" id="hsa:146857"/>
<dbReference type="MANE-Select" id="ENST00000285013.11">
    <property type="protein sequence ID" value="ENSP00000285013.6"/>
    <property type="RefSeq nucleotide sequence ID" value="NM_144682.6"/>
    <property type="RefSeq protein sequence ID" value="NP_653283.3"/>
</dbReference>
<dbReference type="UCSC" id="uc002hjk.2">
    <molecule id="Q68D06-1"/>
    <property type="organism name" value="human"/>
</dbReference>
<dbReference type="AGR" id="HGNC:26481"/>
<dbReference type="CTD" id="146857"/>
<dbReference type="DisGeNET" id="146857"/>
<dbReference type="GeneCards" id="SLFN13"/>
<dbReference type="HGNC" id="HGNC:26481">
    <property type="gene designation" value="SLFN13"/>
</dbReference>
<dbReference type="HPA" id="ENSG00000154760">
    <property type="expression patterns" value="Tissue enhanced (bone marrow, salivary gland)"/>
</dbReference>
<dbReference type="MIM" id="614957">
    <property type="type" value="gene"/>
</dbReference>
<dbReference type="neXtProt" id="NX_Q68D06"/>
<dbReference type="OpenTargets" id="ENSG00000154760"/>
<dbReference type="PharmGKB" id="PA144596360"/>
<dbReference type="VEuPathDB" id="HostDB:ENSG00000154760"/>
<dbReference type="eggNOG" id="ENOG502QWKG">
    <property type="taxonomic scope" value="Eukaryota"/>
</dbReference>
<dbReference type="GeneTree" id="ENSGT00410000025651"/>
<dbReference type="HOGENOM" id="CLU_007071_0_0_1"/>
<dbReference type="InParanoid" id="Q68D06"/>
<dbReference type="OMA" id="TKQQGSC"/>
<dbReference type="OrthoDB" id="6052143at2759"/>
<dbReference type="PAN-GO" id="Q68D06">
    <property type="GO annotations" value="2 GO annotations based on evolutionary models"/>
</dbReference>
<dbReference type="PhylomeDB" id="Q68D06"/>
<dbReference type="TreeFam" id="TF337168"/>
<dbReference type="PathwayCommons" id="Q68D06"/>
<dbReference type="BioGRID-ORCS" id="146857">
    <property type="hits" value="9 hits in 1148 CRISPR screens"/>
</dbReference>
<dbReference type="ChiTaRS" id="SLFN13">
    <property type="organism name" value="human"/>
</dbReference>
<dbReference type="GenomeRNAi" id="146857"/>
<dbReference type="Pharos" id="Q68D06">
    <property type="development level" value="Tdark"/>
</dbReference>
<dbReference type="PRO" id="PR:Q68D06"/>
<dbReference type="Proteomes" id="UP000005640">
    <property type="component" value="Chromosome 17"/>
</dbReference>
<dbReference type="RNAct" id="Q68D06">
    <property type="molecule type" value="protein"/>
</dbReference>
<dbReference type="Bgee" id="ENSG00000154760">
    <property type="expression patterns" value="Expressed in right uterine tube and 116 other cell types or tissues"/>
</dbReference>
<dbReference type="ExpressionAtlas" id="Q68D06">
    <property type="expression patterns" value="baseline and differential"/>
</dbReference>
<dbReference type="GO" id="GO:0005737">
    <property type="term" value="C:cytoplasm"/>
    <property type="evidence" value="ECO:0000314"/>
    <property type="project" value="UniProtKB"/>
</dbReference>
<dbReference type="GO" id="GO:0005524">
    <property type="term" value="F:ATP binding"/>
    <property type="evidence" value="ECO:0007669"/>
    <property type="project" value="UniProtKB-KW"/>
</dbReference>
<dbReference type="GO" id="GO:0004521">
    <property type="term" value="F:RNA endonuclease activity"/>
    <property type="evidence" value="ECO:0000314"/>
    <property type="project" value="UniProtKB"/>
</dbReference>
<dbReference type="GO" id="GO:0000049">
    <property type="term" value="F:tRNA binding"/>
    <property type="evidence" value="ECO:0000318"/>
    <property type="project" value="GO_Central"/>
</dbReference>
<dbReference type="GO" id="GO:0008270">
    <property type="term" value="F:zinc ion binding"/>
    <property type="evidence" value="ECO:0000250"/>
    <property type="project" value="UniProtKB"/>
</dbReference>
<dbReference type="GO" id="GO:0051607">
    <property type="term" value="P:defense response to virus"/>
    <property type="evidence" value="ECO:0000318"/>
    <property type="project" value="GO_Central"/>
</dbReference>
<dbReference type="GO" id="GO:0016075">
    <property type="term" value="P:rRNA catabolic process"/>
    <property type="evidence" value="ECO:0000314"/>
    <property type="project" value="UniProtKB"/>
</dbReference>
<dbReference type="GO" id="GO:0016078">
    <property type="term" value="P:tRNA decay"/>
    <property type="evidence" value="ECO:0000314"/>
    <property type="project" value="UniProtKB"/>
</dbReference>
<dbReference type="FunFam" id="3.30.950.30:FF:000002">
    <property type="entry name" value="Schlafen family member 11"/>
    <property type="match status" value="1"/>
</dbReference>
<dbReference type="FunFam" id="3.40.50.300:FF:001322">
    <property type="entry name" value="Schlafen family member 11"/>
    <property type="match status" value="1"/>
</dbReference>
<dbReference type="Gene3D" id="3.40.50.300">
    <property type="entry name" value="P-loop containing nucleotide triphosphate hydrolases"/>
    <property type="match status" value="2"/>
</dbReference>
<dbReference type="Gene3D" id="3.30.950.30">
    <property type="entry name" value="Schlafen, AAA domain"/>
    <property type="match status" value="1"/>
</dbReference>
<dbReference type="InterPro" id="IPR027417">
    <property type="entry name" value="P-loop_NTPase"/>
</dbReference>
<dbReference type="InterPro" id="IPR031450">
    <property type="entry name" value="Poxin-SLFN/SLFN_N"/>
</dbReference>
<dbReference type="InterPro" id="IPR029684">
    <property type="entry name" value="Schlafen"/>
</dbReference>
<dbReference type="InterPro" id="IPR007421">
    <property type="entry name" value="Schlafen_AlbA_2_dom"/>
</dbReference>
<dbReference type="InterPro" id="IPR038461">
    <property type="entry name" value="Schlafen_AlbA_2_dom_sf"/>
</dbReference>
<dbReference type="InterPro" id="IPR018647">
    <property type="entry name" value="SLFN_3-like_DNA/RNA_helicase"/>
</dbReference>
<dbReference type="InterPro" id="IPR048729">
    <property type="entry name" value="SLFN_GTPase-like"/>
</dbReference>
<dbReference type="PANTHER" id="PTHR12155">
    <property type="entry name" value="SCHLAFEN"/>
    <property type="match status" value="1"/>
</dbReference>
<dbReference type="PANTHER" id="PTHR12155:SF43">
    <property type="entry name" value="SCHLAFEN FAMILY MEMBER 13"/>
    <property type="match status" value="1"/>
</dbReference>
<dbReference type="Pfam" id="PF17057">
    <property type="entry name" value="B3R"/>
    <property type="match status" value="1"/>
</dbReference>
<dbReference type="Pfam" id="PF09848">
    <property type="entry name" value="SLFN-g3_helicase"/>
    <property type="match status" value="1"/>
</dbReference>
<dbReference type="Pfam" id="PF04326">
    <property type="entry name" value="SLFN_AlbA_2"/>
    <property type="match status" value="1"/>
</dbReference>
<dbReference type="Pfam" id="PF21026">
    <property type="entry name" value="SLFN_GTPase-like"/>
    <property type="match status" value="1"/>
</dbReference>
<dbReference type="SUPFAM" id="SSF52540">
    <property type="entry name" value="P-loop containing nucleoside triphosphate hydrolases"/>
    <property type="match status" value="1"/>
</dbReference>
<organism>
    <name type="scientific">Homo sapiens</name>
    <name type="common">Human</name>
    <dbReference type="NCBI Taxonomy" id="9606"/>
    <lineage>
        <taxon>Eukaryota</taxon>
        <taxon>Metazoa</taxon>
        <taxon>Chordata</taxon>
        <taxon>Craniata</taxon>
        <taxon>Vertebrata</taxon>
        <taxon>Euteleostomi</taxon>
        <taxon>Mammalia</taxon>
        <taxon>Eutheria</taxon>
        <taxon>Euarchontoglires</taxon>
        <taxon>Primates</taxon>
        <taxon>Haplorrhini</taxon>
        <taxon>Catarrhini</taxon>
        <taxon>Hominidae</taxon>
        <taxon>Homo</taxon>
    </lineage>
</organism>
<gene>
    <name evidence="7" type="primary">SLFN13</name>
</gene>
<feature type="chain" id="PRO_0000282985" description="Schlafen family member 13">
    <location>
        <begin position="1"/>
        <end position="897"/>
    </location>
</feature>
<feature type="region of interest" description="N'-domain region" evidence="1">
    <location>
        <begin position="2"/>
        <end position="355"/>
    </location>
</feature>
<feature type="active site" evidence="3">
    <location>
        <position position="208"/>
    </location>
</feature>
<feature type="active site" evidence="3">
    <location>
        <position position="213"/>
    </location>
</feature>
<feature type="binding site" evidence="1">
    <location>
        <position position="284"/>
    </location>
    <ligand>
        <name>Zn(2+)</name>
        <dbReference type="ChEBI" id="CHEBI:29105"/>
    </ligand>
</feature>
<feature type="binding site" evidence="1">
    <location>
        <position position="286"/>
    </location>
    <ligand>
        <name>Zn(2+)</name>
        <dbReference type="ChEBI" id="CHEBI:29105"/>
    </ligand>
</feature>
<feature type="binding site" evidence="1">
    <location>
        <position position="321"/>
    </location>
    <ligand>
        <name>Zn(2+)</name>
        <dbReference type="ChEBI" id="CHEBI:29105"/>
    </ligand>
</feature>
<feature type="binding site" evidence="2">
    <location>
        <begin position="599"/>
        <end position="606"/>
    </location>
    <ligand>
        <name>ATP</name>
        <dbReference type="ChEBI" id="CHEBI:30616"/>
    </ligand>
</feature>
<feature type="splice variant" id="VSP_024273" description="In isoform 2." evidence="4">
    <location>
        <begin position="9"/>
        <end position="326"/>
    </location>
</feature>
<feature type="sequence variant" id="VAR_031449" description="In dbSNP:rs12943866.">
    <original>N</original>
    <variation>S</variation>
    <location>
        <position position="4"/>
    </location>
</feature>
<feature type="sequence variant" id="VAR_031450" description="In dbSNP:rs7216628.">
    <original>A</original>
    <variation>T</variation>
    <location>
        <position position="50"/>
    </location>
</feature>
<feature type="sequence variant" id="VAR_053878" description="In dbSNP:rs16970912.">
    <original>P</original>
    <variation>L</variation>
    <location>
        <position position="433"/>
    </location>
</feature>
<feature type="sequence variant" id="VAR_053879" description="In dbSNP:rs11657183.">
    <original>D</original>
    <variation>V</variation>
    <location>
        <position position="642"/>
    </location>
</feature>
<feature type="sequence variant" id="VAR_031451" description="In dbSNP:rs3744371.">
    <original>E</original>
    <variation>K</variation>
    <location>
        <position position="652"/>
    </location>
</feature>
<feature type="mutagenesis site" description="Abolished endoribonuclease activity." evidence="3">
    <original>E</original>
    <variation>A</variation>
    <location>
        <position position="208"/>
    </location>
</feature>
<feature type="mutagenesis site" description="Abolished endoribonuclease activity." evidence="3">
    <original>E</original>
    <variation>A</variation>
    <location>
        <position position="213"/>
    </location>
</feature>
<feature type="mutagenesis site" description="Reduced endoribonuclease activity." evidence="3">
    <original>D</original>
    <variation>A</variation>
    <location>
        <position position="251"/>
    </location>
</feature>
<sequence length="897" mass="102045">MEANHCSLGVYPSYPDLVIDVGEVTLGEENRKKLQKTQRDQERARVIRAACALLNSGGGVIQMEMANRDERPTEMGLDLEESLRKLIQYPYLQAFFETKQHGRCFYIFVKSWSGDPFLKDGSFNSRICSLSSSLYCRSGTSVLHMNSRQAFDFLKTKERQSKYNLINEGSPPSKIMKAVYQNISESNPAYEVFQTDTIEYGEILSFPESPSIEFKQFSTKHIQQYVENIIPEYISAFANTEGGYLFIGVDDKSRKVLGCAKEQVDPDSLKNVIARAISKLPIVHFCSSKPRVEYSTKIVEVFCGKELYGYLCVIKVKAFCCVVFSEAPKSWMVREKYIRPLTTEEWVEKMMDADPEFPPDFAEAFESQLSLSDSPSLCRPVYSKKGLEHKADLQQHLFPVPPGHLECTPESLWKELSLQHEGLKELIHKQMRPFSQGIVILSRSWAVDLNLQEKPGVICDALLIAQNSTPILYTILREQDAEGQDYCTRTAFTLKQKLVNMGGYTGKVCVRAKVLCLSPESSAEALEAAVSPMDYPASYSLAGTQHMEALLQSLVIVLLGFRSLLSDQLGCEVLNLLTAQQYEIFSRSLRKNRELFVHGLPGSGKTIMAMKIMEKIRNVFHCEAHRILYVCENQPLRNFISDRNICRAETRETFLREKFEHIQHIVIDEAQNFRTEDGDWYRKAKTITQREKDCPGVLWIFLDYFQTSHLGHSGLPPLSAQYPREELTRVVRNADEIAEYIQQEMQLIIENPPINIPHGYLAILSEAKWVPGVPGNTKIIKNFTLEQIVTYVADTCRCFFERGYSPKDVAVLVSTVTEVEQYQSKLLKAMRKKMVVQLSDACDMLGVHIVLDSVRRFSGLERSIVFGIHPRTADPAILPNILICLASRAKQHLYIFL</sequence>
<evidence type="ECO:0000250" key="1">
    <source>
        <dbReference type="UniProtKB" id="Q5U311"/>
    </source>
</evidence>
<evidence type="ECO:0000255" key="2"/>
<evidence type="ECO:0000269" key="3">
    <source>
    </source>
</evidence>
<evidence type="ECO:0000303" key="4">
    <source>
    </source>
</evidence>
<evidence type="ECO:0000303" key="5">
    <source>
    </source>
</evidence>
<evidence type="ECO:0000305" key="6"/>
<evidence type="ECO:0000312" key="7">
    <source>
        <dbReference type="HGNC" id="HGNC:26481"/>
    </source>
</evidence>
<comment type="function">
    <text evidence="3">Endoribonuclease that cleaves tRNAs and rRNAs (PubMed:29563550). Cleaves tRNAs 11 nucleotides from the 3'-terminus at the acceptor stem (PubMed:29563550). Does not act on tRNA(Sec) (PubMed:29563550). Able to restrict HIV-1 virus replication; ability to inhibit HIV-1 replication is dependent on endoribonuclease activity (PubMed:29563550).</text>
</comment>
<comment type="cofactor">
    <cofactor evidence="1">
        <name>Mg(2+)</name>
        <dbReference type="ChEBI" id="CHEBI:18420"/>
    </cofactor>
    <text evidence="1">Can also use Mn(2+).</text>
</comment>
<comment type="subcellular location">
    <subcellularLocation>
        <location evidence="3">Cytoplasm</location>
    </subcellularLocation>
</comment>
<comment type="alternative products">
    <event type="alternative splicing"/>
    <isoform>
        <id>Q68D06-1</id>
        <name>1</name>
        <sequence type="displayed"/>
    </isoform>
    <isoform>
        <id>Q68D06-2</id>
        <name>2</name>
        <sequence type="described" ref="VSP_024273"/>
    </isoform>
</comment>
<comment type="domain">
    <text evidence="1">Shows a pseudo-dimeric U-pillow-shaped architecture of the SLFN13 N'-domain that may clamp base-paired RNAs.</text>
</comment>
<comment type="similarity">
    <text evidence="6">Belongs to the Schlafen family. Subgroup III subfamily.</text>
</comment>
<comment type="sequence caution" evidence="6">
    <conflict type="frameshift">
        <sequence resource="EMBL" id="AK127728"/>
    </conflict>
</comment>
<proteinExistence type="evidence at protein level"/>
<name>SLN13_HUMAN</name>
<keyword id="KW-0025">Alternative splicing</keyword>
<keyword id="KW-0067">ATP-binding</keyword>
<keyword id="KW-0963">Cytoplasm</keyword>
<keyword id="KW-0255">Endonuclease</keyword>
<keyword id="KW-0378">Hydrolase</keyword>
<keyword id="KW-0460">Magnesium</keyword>
<keyword id="KW-0479">Metal-binding</keyword>
<keyword id="KW-0540">Nuclease</keyword>
<keyword id="KW-0547">Nucleotide-binding</keyword>
<keyword id="KW-1267">Proteomics identification</keyword>
<keyword id="KW-1185">Reference proteome</keyword>
<keyword id="KW-0862">Zinc</keyword>
<reference key="1">
    <citation type="journal article" date="2004" name="Nat. Genet.">
        <title>Complete sequencing and characterization of 21,243 full-length human cDNAs.</title>
        <authorList>
            <person name="Ota T."/>
            <person name="Suzuki Y."/>
            <person name="Nishikawa T."/>
            <person name="Otsuki T."/>
            <person name="Sugiyama T."/>
            <person name="Irie R."/>
            <person name="Wakamatsu A."/>
            <person name="Hayashi K."/>
            <person name="Sato H."/>
            <person name="Nagai K."/>
            <person name="Kimura K."/>
            <person name="Makita H."/>
            <person name="Sekine M."/>
            <person name="Obayashi M."/>
            <person name="Nishi T."/>
            <person name="Shibahara T."/>
            <person name="Tanaka T."/>
            <person name="Ishii S."/>
            <person name="Yamamoto J."/>
            <person name="Saito K."/>
            <person name="Kawai Y."/>
            <person name="Isono Y."/>
            <person name="Nakamura Y."/>
            <person name="Nagahari K."/>
            <person name="Murakami K."/>
            <person name="Yasuda T."/>
            <person name="Iwayanagi T."/>
            <person name="Wagatsuma M."/>
            <person name="Shiratori A."/>
            <person name="Sudo H."/>
            <person name="Hosoiri T."/>
            <person name="Kaku Y."/>
            <person name="Kodaira H."/>
            <person name="Kondo H."/>
            <person name="Sugawara M."/>
            <person name="Takahashi M."/>
            <person name="Kanda K."/>
            <person name="Yokoi T."/>
            <person name="Furuya T."/>
            <person name="Kikkawa E."/>
            <person name="Omura Y."/>
            <person name="Abe K."/>
            <person name="Kamihara K."/>
            <person name="Katsuta N."/>
            <person name="Sato K."/>
            <person name="Tanikawa M."/>
            <person name="Yamazaki M."/>
            <person name="Ninomiya K."/>
            <person name="Ishibashi T."/>
            <person name="Yamashita H."/>
            <person name="Murakawa K."/>
            <person name="Fujimori K."/>
            <person name="Tanai H."/>
            <person name="Kimata M."/>
            <person name="Watanabe M."/>
            <person name="Hiraoka S."/>
            <person name="Chiba Y."/>
            <person name="Ishida S."/>
            <person name="Ono Y."/>
            <person name="Takiguchi S."/>
            <person name="Watanabe S."/>
            <person name="Yosida M."/>
            <person name="Hotuta T."/>
            <person name="Kusano J."/>
            <person name="Kanehori K."/>
            <person name="Takahashi-Fujii A."/>
            <person name="Hara H."/>
            <person name="Tanase T.-O."/>
            <person name="Nomura Y."/>
            <person name="Togiya S."/>
            <person name="Komai F."/>
            <person name="Hara R."/>
            <person name="Takeuchi K."/>
            <person name="Arita M."/>
            <person name="Imose N."/>
            <person name="Musashino K."/>
            <person name="Yuuki H."/>
            <person name="Oshima A."/>
            <person name="Sasaki N."/>
            <person name="Aotsuka S."/>
            <person name="Yoshikawa Y."/>
            <person name="Matsunawa H."/>
            <person name="Ichihara T."/>
            <person name="Shiohata N."/>
            <person name="Sano S."/>
            <person name="Moriya S."/>
            <person name="Momiyama H."/>
            <person name="Satoh N."/>
            <person name="Takami S."/>
            <person name="Terashima Y."/>
            <person name="Suzuki O."/>
            <person name="Nakagawa S."/>
            <person name="Senoh A."/>
            <person name="Mizoguchi H."/>
            <person name="Goto Y."/>
            <person name="Shimizu F."/>
            <person name="Wakebe H."/>
            <person name="Hishigaki H."/>
            <person name="Watanabe T."/>
            <person name="Sugiyama A."/>
            <person name="Takemoto M."/>
            <person name="Kawakami B."/>
            <person name="Yamazaki M."/>
            <person name="Watanabe K."/>
            <person name="Kumagai A."/>
            <person name="Itakura S."/>
            <person name="Fukuzumi Y."/>
            <person name="Fujimori Y."/>
            <person name="Komiyama M."/>
            <person name="Tashiro H."/>
            <person name="Tanigami A."/>
            <person name="Fujiwara T."/>
            <person name="Ono T."/>
            <person name="Yamada K."/>
            <person name="Fujii Y."/>
            <person name="Ozaki K."/>
            <person name="Hirao M."/>
            <person name="Ohmori Y."/>
            <person name="Kawabata A."/>
            <person name="Hikiji T."/>
            <person name="Kobatake N."/>
            <person name="Inagaki H."/>
            <person name="Ikema Y."/>
            <person name="Okamoto S."/>
            <person name="Okitani R."/>
            <person name="Kawakami T."/>
            <person name="Noguchi S."/>
            <person name="Itoh T."/>
            <person name="Shigeta K."/>
            <person name="Senba T."/>
            <person name="Matsumura K."/>
            <person name="Nakajima Y."/>
            <person name="Mizuno T."/>
            <person name="Morinaga M."/>
            <person name="Sasaki M."/>
            <person name="Togashi T."/>
            <person name="Oyama M."/>
            <person name="Hata H."/>
            <person name="Watanabe M."/>
            <person name="Komatsu T."/>
            <person name="Mizushima-Sugano J."/>
            <person name="Satoh T."/>
            <person name="Shirai Y."/>
            <person name="Takahashi Y."/>
            <person name="Nakagawa K."/>
            <person name="Okumura K."/>
            <person name="Nagase T."/>
            <person name="Nomura N."/>
            <person name="Kikuchi H."/>
            <person name="Masuho Y."/>
            <person name="Yamashita R."/>
            <person name="Nakai K."/>
            <person name="Yada T."/>
            <person name="Nakamura Y."/>
            <person name="Ohara O."/>
            <person name="Isogai T."/>
            <person name="Sugano S."/>
        </authorList>
    </citation>
    <scope>NUCLEOTIDE SEQUENCE [LARGE SCALE MRNA] (ISOFORMS 1 AND 2)</scope>
</reference>
<reference key="2">
    <citation type="journal article" date="2007" name="BMC Genomics">
        <title>The full-ORF clone resource of the German cDNA consortium.</title>
        <authorList>
            <person name="Bechtel S."/>
            <person name="Rosenfelder H."/>
            <person name="Duda A."/>
            <person name="Schmidt C.P."/>
            <person name="Ernst U."/>
            <person name="Wellenreuther R."/>
            <person name="Mehrle A."/>
            <person name="Schuster C."/>
            <person name="Bahr A."/>
            <person name="Bloecker H."/>
            <person name="Heubner D."/>
            <person name="Hoerlein A."/>
            <person name="Michel G."/>
            <person name="Wedler H."/>
            <person name="Koehrer K."/>
            <person name="Ottenwaelder B."/>
            <person name="Poustka A."/>
            <person name="Wiemann S."/>
            <person name="Schupp I."/>
        </authorList>
    </citation>
    <scope>NUCLEOTIDE SEQUENCE [LARGE SCALE MRNA] (ISOFORM 1)</scope>
    <source>
        <tissue>Cervix</tissue>
        <tissue>Stomach</tissue>
    </source>
</reference>
<reference key="3">
    <citation type="submission" date="2005-09" db="EMBL/GenBank/DDBJ databases">
        <authorList>
            <person name="Mural R.J."/>
            <person name="Istrail S."/>
            <person name="Sutton G.G."/>
            <person name="Florea L."/>
            <person name="Halpern A.L."/>
            <person name="Mobarry C.M."/>
            <person name="Lippert R."/>
            <person name="Walenz B."/>
            <person name="Shatkay H."/>
            <person name="Dew I."/>
            <person name="Miller J.R."/>
            <person name="Flanigan M.J."/>
            <person name="Edwards N.J."/>
            <person name="Bolanos R."/>
            <person name="Fasulo D."/>
            <person name="Halldorsson B.V."/>
            <person name="Hannenhalli S."/>
            <person name="Turner R."/>
            <person name="Yooseph S."/>
            <person name="Lu F."/>
            <person name="Nusskern D.R."/>
            <person name="Shue B.C."/>
            <person name="Zheng X.H."/>
            <person name="Zhong F."/>
            <person name="Delcher A.L."/>
            <person name="Huson D.H."/>
            <person name="Kravitz S.A."/>
            <person name="Mouchard L."/>
            <person name="Reinert K."/>
            <person name="Remington K.A."/>
            <person name="Clark A.G."/>
            <person name="Waterman M.S."/>
            <person name="Eichler E.E."/>
            <person name="Adams M.D."/>
            <person name="Hunkapiller M.W."/>
            <person name="Myers E.W."/>
            <person name="Venter J.C."/>
        </authorList>
    </citation>
    <scope>NUCLEOTIDE SEQUENCE [LARGE SCALE GENOMIC DNA]</scope>
</reference>
<reference key="4">
    <citation type="journal article" date="2018" name="Nat. Commun.">
        <title>Structure of Schlafen13 reveals a new class of tRNA/rRNA- targeting RNase engaged in translational control.</title>
        <authorList>
            <person name="Yang J.Y."/>
            <person name="Deng X.Y."/>
            <person name="Li Y.S."/>
            <person name="Ma X.C."/>
            <person name="Feng J.X."/>
            <person name="Yu B."/>
            <person name="Chen Y."/>
            <person name="Luo Y.L."/>
            <person name="Wang X."/>
            <person name="Chen M.L."/>
            <person name="Fang Z.X."/>
            <person name="Zheng F.X."/>
            <person name="Li Y.P."/>
            <person name="Zhong Q."/>
            <person name="Kang T.B."/>
            <person name="Song L.B."/>
            <person name="Xu R.H."/>
            <person name="Zeng M.S."/>
            <person name="Chen W."/>
            <person name="Zhang H."/>
            <person name="Xie W."/>
            <person name="Gao S."/>
        </authorList>
    </citation>
    <scope>FUNCTION</scope>
    <scope>SUBCELLULAR LOCATION</scope>
    <scope>ACTIVE SITE</scope>
    <scope>MUTAGENESIS OF GLU-208; GLU-213 AND ASP-251</scope>
</reference>
<protein>
    <recommendedName>
        <fullName>Schlafen family member 13</fullName>
        <ecNumber evidence="3">3.1.-.-</ecNumber>
    </recommendedName>
    <alternativeName>
        <fullName evidence="6">Schlafen-13</fullName>
        <shortName evidence="5">hSLFN13</shortName>
    </alternativeName>
</protein>
<accession>Q68D06</accession>
<accession>E1P645</accession>
<accession>Q658M1</accession>
<accession>Q6ZS51</accession>
<accession>Q96A81</accession>